<reference key="1">
    <citation type="journal article" date="1990" name="J. Biochem.">
        <title>Primary structure of the inorganic pyrophosphatase from thermophilic bacterium PS-3.</title>
        <authorList>
            <person name="Ichiba T."/>
            <person name="Takenaka O."/>
            <person name="Samejima T."/>
            <person name="Hachimori A."/>
        </authorList>
    </citation>
    <scope>PROTEIN SEQUENCE OF 2-165</scope>
</reference>
<organism>
    <name type="scientific">Bacillus sp. (strain PS3)</name>
    <dbReference type="NCBI Taxonomy" id="2334"/>
    <lineage>
        <taxon>Bacteria</taxon>
        <taxon>Bacillati</taxon>
        <taxon>Bacillota</taxon>
        <taxon>Bacilli</taxon>
        <taxon>Bacillales</taxon>
        <taxon>Bacillaceae</taxon>
        <taxon>Bacillus</taxon>
    </lineage>
</organism>
<gene>
    <name evidence="1" type="primary">ppa</name>
</gene>
<name>IPYR_BACP3</name>
<proteinExistence type="evidence at protein level"/>
<accession>P19514</accession>
<evidence type="ECO:0000255" key="1">
    <source>
        <dbReference type="HAMAP-Rule" id="MF_00209"/>
    </source>
</evidence>
<evidence type="ECO:0000269" key="2">
    <source>
    </source>
</evidence>
<dbReference type="EC" id="3.6.1.1" evidence="1"/>
<dbReference type="PIR" id="JX0135">
    <property type="entry name" value="JX0135"/>
</dbReference>
<dbReference type="SMR" id="P19514"/>
<dbReference type="GO" id="GO:0005737">
    <property type="term" value="C:cytoplasm"/>
    <property type="evidence" value="ECO:0007669"/>
    <property type="project" value="UniProtKB-SubCell"/>
</dbReference>
<dbReference type="GO" id="GO:0004427">
    <property type="term" value="F:inorganic diphosphate phosphatase activity"/>
    <property type="evidence" value="ECO:0007669"/>
    <property type="project" value="UniProtKB-UniRule"/>
</dbReference>
<dbReference type="GO" id="GO:0000287">
    <property type="term" value="F:magnesium ion binding"/>
    <property type="evidence" value="ECO:0007669"/>
    <property type="project" value="UniProtKB-UniRule"/>
</dbReference>
<dbReference type="GO" id="GO:0006796">
    <property type="term" value="P:phosphate-containing compound metabolic process"/>
    <property type="evidence" value="ECO:0007669"/>
    <property type="project" value="InterPro"/>
</dbReference>
<dbReference type="CDD" id="cd00412">
    <property type="entry name" value="pyrophosphatase"/>
    <property type="match status" value="1"/>
</dbReference>
<dbReference type="FunFam" id="3.90.80.10:FF:000003">
    <property type="entry name" value="Inorganic pyrophosphatase"/>
    <property type="match status" value="1"/>
</dbReference>
<dbReference type="Gene3D" id="3.90.80.10">
    <property type="entry name" value="Inorganic pyrophosphatase"/>
    <property type="match status" value="1"/>
</dbReference>
<dbReference type="HAMAP" id="MF_00209">
    <property type="entry name" value="Inorganic_PPase"/>
    <property type="match status" value="1"/>
</dbReference>
<dbReference type="InterPro" id="IPR008162">
    <property type="entry name" value="Pyrophosphatase"/>
</dbReference>
<dbReference type="InterPro" id="IPR036649">
    <property type="entry name" value="Pyrophosphatase_sf"/>
</dbReference>
<dbReference type="PANTHER" id="PTHR10286">
    <property type="entry name" value="INORGANIC PYROPHOSPHATASE"/>
    <property type="match status" value="1"/>
</dbReference>
<dbReference type="Pfam" id="PF00719">
    <property type="entry name" value="Pyrophosphatase"/>
    <property type="match status" value="1"/>
</dbReference>
<dbReference type="SUPFAM" id="SSF50324">
    <property type="entry name" value="Inorganic pyrophosphatase"/>
    <property type="match status" value="1"/>
</dbReference>
<dbReference type="PROSITE" id="PS00387">
    <property type="entry name" value="PPASE"/>
    <property type="match status" value="1"/>
</dbReference>
<protein>
    <recommendedName>
        <fullName evidence="1">Inorganic pyrophosphatase</fullName>
        <ecNumber evidence="1">3.6.1.1</ecNumber>
    </recommendedName>
    <alternativeName>
        <fullName evidence="1">Pyrophosphate phospho-hydrolase</fullName>
        <shortName evidence="1">PPase</shortName>
    </alternativeName>
</protein>
<comment type="function">
    <text evidence="1">Catalyzes the hydrolysis of inorganic pyrophosphate (PPi) forming two phosphate ions.</text>
</comment>
<comment type="catalytic activity">
    <reaction evidence="1">
        <text>diphosphate + H2O = 2 phosphate + H(+)</text>
        <dbReference type="Rhea" id="RHEA:24576"/>
        <dbReference type="ChEBI" id="CHEBI:15377"/>
        <dbReference type="ChEBI" id="CHEBI:15378"/>
        <dbReference type="ChEBI" id="CHEBI:33019"/>
        <dbReference type="ChEBI" id="CHEBI:43474"/>
        <dbReference type="EC" id="3.6.1.1"/>
    </reaction>
</comment>
<comment type="cofactor">
    <cofactor evidence="1">
        <name>Mg(2+)</name>
        <dbReference type="ChEBI" id="CHEBI:18420"/>
    </cofactor>
</comment>
<comment type="subunit">
    <text>Homotrimer. In presence of divalent cations the trimers aggregate to form a hexamer.</text>
</comment>
<comment type="subcellular location">
    <subcellularLocation>
        <location evidence="1">Cytoplasm</location>
    </subcellularLocation>
</comment>
<comment type="similarity">
    <text evidence="1">Belongs to the PPase family.</text>
</comment>
<keyword id="KW-0963">Cytoplasm</keyword>
<keyword id="KW-0903">Direct protein sequencing</keyword>
<keyword id="KW-0378">Hydrolase</keyword>
<keyword id="KW-0460">Magnesium</keyword>
<keyword id="KW-0479">Metal-binding</keyword>
<sequence>MAFENKIVEAFIEIPTGSQNKYEFDKERGIFKLDRVLYSPMFYPAEYGYLQNTLALDGDPLDILVITTNPPFPGCVIDTRVIGYLNMVDSGEEDAKLIGVPVEDPRFDEVRSIEDLPQHKLKEIAHFFERYKDLQGKRTEIGTWEGPEAAAKLIDECIARYNEQK</sequence>
<feature type="initiator methionine" description="Removed" evidence="2">
    <location>
        <position position="1"/>
    </location>
</feature>
<feature type="chain" id="PRO_0000137478" description="Inorganic pyrophosphatase">
    <location>
        <begin position="2"/>
        <end position="165"/>
    </location>
</feature>
<feature type="binding site" evidence="1">
    <location>
        <position position="21"/>
    </location>
    <ligand>
        <name>substrate</name>
    </ligand>
</feature>
<feature type="binding site" evidence="1">
    <location>
        <position position="35"/>
    </location>
    <ligand>
        <name>substrate</name>
    </ligand>
</feature>
<feature type="binding site" evidence="1">
    <location>
        <position position="47"/>
    </location>
    <ligand>
        <name>substrate</name>
    </ligand>
</feature>
<feature type="binding site" evidence="1">
    <location>
        <position position="57"/>
    </location>
    <ligand>
        <name>Mg(2+)</name>
        <dbReference type="ChEBI" id="CHEBI:18420"/>
        <label>1</label>
    </ligand>
</feature>
<feature type="binding site" evidence="1">
    <location>
        <position position="62"/>
    </location>
    <ligand>
        <name>Mg(2+)</name>
        <dbReference type="ChEBI" id="CHEBI:18420"/>
        <label>1</label>
    </ligand>
</feature>
<feature type="binding site" evidence="1">
    <location>
        <position position="62"/>
    </location>
    <ligand>
        <name>Mg(2+)</name>
        <dbReference type="ChEBI" id="CHEBI:18420"/>
        <label>2</label>
    </ligand>
</feature>
<feature type="binding site" evidence="1">
    <location>
        <position position="94"/>
    </location>
    <ligand>
        <name>Mg(2+)</name>
        <dbReference type="ChEBI" id="CHEBI:18420"/>
        <label>1</label>
    </ligand>
</feature>
<feature type="binding site" evidence="1">
    <location>
        <position position="131"/>
    </location>
    <ligand>
        <name>substrate</name>
    </ligand>
</feature>